<comment type="function">
    <text evidence="1">Catalyzes the attachment of threonine to tRNA(Thr) in a two-step reaction: L-threonine is first activated by ATP to form Thr-AMP and then transferred to the acceptor end of tRNA(Thr). Also edits incorrectly charged L-seryl-tRNA(Thr).</text>
</comment>
<comment type="catalytic activity">
    <reaction evidence="1">
        <text>tRNA(Thr) + L-threonine + ATP = L-threonyl-tRNA(Thr) + AMP + diphosphate + H(+)</text>
        <dbReference type="Rhea" id="RHEA:24624"/>
        <dbReference type="Rhea" id="RHEA-COMP:9670"/>
        <dbReference type="Rhea" id="RHEA-COMP:9704"/>
        <dbReference type="ChEBI" id="CHEBI:15378"/>
        <dbReference type="ChEBI" id="CHEBI:30616"/>
        <dbReference type="ChEBI" id="CHEBI:33019"/>
        <dbReference type="ChEBI" id="CHEBI:57926"/>
        <dbReference type="ChEBI" id="CHEBI:78442"/>
        <dbReference type="ChEBI" id="CHEBI:78534"/>
        <dbReference type="ChEBI" id="CHEBI:456215"/>
        <dbReference type="EC" id="6.1.1.3"/>
    </reaction>
</comment>
<comment type="cofactor">
    <cofactor evidence="1">
        <name>Zn(2+)</name>
        <dbReference type="ChEBI" id="CHEBI:29105"/>
    </cofactor>
    <text evidence="1">Binds 1 zinc ion per subunit.</text>
</comment>
<comment type="subunit">
    <text evidence="1">Homodimer.</text>
</comment>
<comment type="subcellular location">
    <subcellularLocation>
        <location evidence="1">Cytoplasm</location>
    </subcellularLocation>
</comment>
<comment type="similarity">
    <text evidence="1">Belongs to the class-II aminoacyl-tRNA synthetase family.</text>
</comment>
<gene>
    <name evidence="1" type="primary">thrS</name>
    <name type="ordered locus">XCV2795</name>
</gene>
<name>SYT_XANE5</name>
<protein>
    <recommendedName>
        <fullName evidence="1">Threonine--tRNA ligase</fullName>
        <ecNumber evidence="1">6.1.1.3</ecNumber>
    </recommendedName>
    <alternativeName>
        <fullName evidence="1">Threonyl-tRNA synthetase</fullName>
        <shortName evidence="1">ThrRS</shortName>
    </alternativeName>
</protein>
<feature type="chain" id="PRO_1000020552" description="Threonine--tRNA ligase">
    <location>
        <begin position="1"/>
        <end position="634"/>
    </location>
</feature>
<feature type="domain" description="TGS" evidence="2">
    <location>
        <begin position="1"/>
        <end position="61"/>
    </location>
</feature>
<feature type="region of interest" description="Catalytic" evidence="1">
    <location>
        <begin position="243"/>
        <end position="534"/>
    </location>
</feature>
<feature type="binding site" evidence="1">
    <location>
        <position position="334"/>
    </location>
    <ligand>
        <name>Zn(2+)</name>
        <dbReference type="ChEBI" id="CHEBI:29105"/>
    </ligand>
</feature>
<feature type="binding site" evidence="1">
    <location>
        <position position="385"/>
    </location>
    <ligand>
        <name>Zn(2+)</name>
        <dbReference type="ChEBI" id="CHEBI:29105"/>
    </ligand>
</feature>
<feature type="binding site" evidence="1">
    <location>
        <position position="511"/>
    </location>
    <ligand>
        <name>Zn(2+)</name>
        <dbReference type="ChEBI" id="CHEBI:29105"/>
    </ligand>
</feature>
<proteinExistence type="inferred from homology"/>
<reference key="1">
    <citation type="journal article" date="2005" name="J. Bacteriol.">
        <title>Insights into genome plasticity and pathogenicity of the plant pathogenic Bacterium Xanthomonas campestris pv. vesicatoria revealed by the complete genome sequence.</title>
        <authorList>
            <person name="Thieme F."/>
            <person name="Koebnik R."/>
            <person name="Bekel T."/>
            <person name="Berger C."/>
            <person name="Boch J."/>
            <person name="Buettner D."/>
            <person name="Caldana C."/>
            <person name="Gaigalat L."/>
            <person name="Goesmann A."/>
            <person name="Kay S."/>
            <person name="Kirchner O."/>
            <person name="Lanz C."/>
            <person name="Linke B."/>
            <person name="McHardy A.C."/>
            <person name="Meyer F."/>
            <person name="Mittenhuber G."/>
            <person name="Nies D.H."/>
            <person name="Niesbach-Kloesgen U."/>
            <person name="Patschkowski T."/>
            <person name="Rueckert C."/>
            <person name="Rupp O."/>
            <person name="Schneiker S."/>
            <person name="Schuster S.C."/>
            <person name="Vorhoelter F.J."/>
            <person name="Weber E."/>
            <person name="Puehler A."/>
            <person name="Bonas U."/>
            <person name="Bartels D."/>
            <person name="Kaiser O."/>
        </authorList>
    </citation>
    <scope>NUCLEOTIDE SEQUENCE [LARGE SCALE GENOMIC DNA]</scope>
    <source>
        <strain>85-10</strain>
    </source>
</reference>
<keyword id="KW-0030">Aminoacyl-tRNA synthetase</keyword>
<keyword id="KW-0067">ATP-binding</keyword>
<keyword id="KW-0963">Cytoplasm</keyword>
<keyword id="KW-0436">Ligase</keyword>
<keyword id="KW-0479">Metal-binding</keyword>
<keyword id="KW-0547">Nucleotide-binding</keyword>
<keyword id="KW-0648">Protein biosynthesis</keyword>
<keyword id="KW-0694">RNA-binding</keyword>
<keyword id="KW-0820">tRNA-binding</keyword>
<keyword id="KW-0862">Zinc</keyword>
<sequence length="634" mass="71841">MINITLPDGSRREFESPVSVMQVAQSIGAGLAKATIAGQVDGQLVDASDVIDHDASLRIITAKDAEGVEIIRHSCAHLVGHAVKQLYPEVKMVIGPVIAEGFYYDIYSERPFTPDDMAAIEQRMQELIAQDYDVIKKVTPRAEVIEVFAQRGEEYKLRLIEDMSEDITAMGLYYHQEYVDMCRGPHVPNTRFLKAFKLTRISGAYWRGDAKNEQLQRIYGTAWADKKQLDAYILRMEEADKRDHRRIGKAQDLFHLQEEAPGLVFWHPKGWSLWQVVEQYMRKVYRDSGYGEVRCPQILDVSLWQKSGHWDNYQDAMFFTESEKRTYAVKPMNCPGHVQVFNQGLHSYRDLPIRYGEFGACHRNEPSGALHGILRVRGFTQDDGHVFCLESQIESEVTAFHQQALAVYTAFGFDDIQIKIALRPEKRLGDDATWDKAEAALRSALGVCGVEWQELPGEGAFYGPKIEYHLKDAIGRTWQLGTMQVDFMMPGRLGAEYVDENSQKKHPVMLHRAIVGSMERFIGILIEHHAGAFPSWLAPVQVVVANITDAQAEYVDSVRKTLANQGFRVSADLRNEKIGYKIREHTLQRVPYLLVVGDREKENGAVAVRTRSGEDLGTMTVSAFIERLQAEQAA</sequence>
<evidence type="ECO:0000255" key="1">
    <source>
        <dbReference type="HAMAP-Rule" id="MF_00184"/>
    </source>
</evidence>
<evidence type="ECO:0000255" key="2">
    <source>
        <dbReference type="PROSITE-ProRule" id="PRU01228"/>
    </source>
</evidence>
<organism>
    <name type="scientific">Xanthomonas euvesicatoria pv. vesicatoria (strain 85-10)</name>
    <name type="common">Xanthomonas campestris pv. vesicatoria</name>
    <dbReference type="NCBI Taxonomy" id="316273"/>
    <lineage>
        <taxon>Bacteria</taxon>
        <taxon>Pseudomonadati</taxon>
        <taxon>Pseudomonadota</taxon>
        <taxon>Gammaproteobacteria</taxon>
        <taxon>Lysobacterales</taxon>
        <taxon>Lysobacteraceae</taxon>
        <taxon>Xanthomonas</taxon>
    </lineage>
</organism>
<accession>Q3BRT7</accession>
<dbReference type="EC" id="6.1.1.3" evidence="1"/>
<dbReference type="EMBL" id="AM039952">
    <property type="protein sequence ID" value="CAJ24474.1"/>
    <property type="molecule type" value="Genomic_DNA"/>
</dbReference>
<dbReference type="RefSeq" id="WP_008574582.1">
    <property type="nucleotide sequence ID" value="NZ_CP017190.1"/>
</dbReference>
<dbReference type="SMR" id="Q3BRT7"/>
<dbReference type="STRING" id="456327.BJD11_08925"/>
<dbReference type="GeneID" id="61779439"/>
<dbReference type="KEGG" id="xcv:XCV2795"/>
<dbReference type="eggNOG" id="COG0441">
    <property type="taxonomic scope" value="Bacteria"/>
</dbReference>
<dbReference type="HOGENOM" id="CLU_008554_0_1_6"/>
<dbReference type="Proteomes" id="UP000007069">
    <property type="component" value="Chromosome"/>
</dbReference>
<dbReference type="GO" id="GO:0005829">
    <property type="term" value="C:cytosol"/>
    <property type="evidence" value="ECO:0007669"/>
    <property type="project" value="TreeGrafter"/>
</dbReference>
<dbReference type="GO" id="GO:0005524">
    <property type="term" value="F:ATP binding"/>
    <property type="evidence" value="ECO:0007669"/>
    <property type="project" value="UniProtKB-UniRule"/>
</dbReference>
<dbReference type="GO" id="GO:0046872">
    <property type="term" value="F:metal ion binding"/>
    <property type="evidence" value="ECO:0007669"/>
    <property type="project" value="UniProtKB-KW"/>
</dbReference>
<dbReference type="GO" id="GO:0004829">
    <property type="term" value="F:threonine-tRNA ligase activity"/>
    <property type="evidence" value="ECO:0007669"/>
    <property type="project" value="UniProtKB-UniRule"/>
</dbReference>
<dbReference type="GO" id="GO:0000049">
    <property type="term" value="F:tRNA binding"/>
    <property type="evidence" value="ECO:0007669"/>
    <property type="project" value="UniProtKB-KW"/>
</dbReference>
<dbReference type="GO" id="GO:0006435">
    <property type="term" value="P:threonyl-tRNA aminoacylation"/>
    <property type="evidence" value="ECO:0007669"/>
    <property type="project" value="UniProtKB-UniRule"/>
</dbReference>
<dbReference type="CDD" id="cd01667">
    <property type="entry name" value="TGS_ThrRS"/>
    <property type="match status" value="1"/>
</dbReference>
<dbReference type="CDD" id="cd00860">
    <property type="entry name" value="ThrRS_anticodon"/>
    <property type="match status" value="1"/>
</dbReference>
<dbReference type="CDD" id="cd00771">
    <property type="entry name" value="ThrRS_core"/>
    <property type="match status" value="1"/>
</dbReference>
<dbReference type="FunFam" id="3.10.20.30:FF:000005">
    <property type="entry name" value="Threonine--tRNA ligase"/>
    <property type="match status" value="1"/>
</dbReference>
<dbReference type="FunFam" id="3.30.54.20:FF:000002">
    <property type="entry name" value="Threonine--tRNA ligase"/>
    <property type="match status" value="1"/>
</dbReference>
<dbReference type="FunFam" id="3.30.930.10:FF:000002">
    <property type="entry name" value="Threonine--tRNA ligase"/>
    <property type="match status" value="1"/>
</dbReference>
<dbReference type="FunFam" id="3.40.50.800:FF:000001">
    <property type="entry name" value="Threonine--tRNA ligase"/>
    <property type="match status" value="1"/>
</dbReference>
<dbReference type="FunFam" id="3.30.980.10:FF:000005">
    <property type="entry name" value="Threonyl-tRNA synthetase, mitochondrial"/>
    <property type="match status" value="1"/>
</dbReference>
<dbReference type="Gene3D" id="3.10.20.30">
    <property type="match status" value="1"/>
</dbReference>
<dbReference type="Gene3D" id="3.30.54.20">
    <property type="match status" value="1"/>
</dbReference>
<dbReference type="Gene3D" id="3.40.50.800">
    <property type="entry name" value="Anticodon-binding domain"/>
    <property type="match status" value="1"/>
</dbReference>
<dbReference type="Gene3D" id="3.30.930.10">
    <property type="entry name" value="Bira Bifunctional Protein, Domain 2"/>
    <property type="match status" value="1"/>
</dbReference>
<dbReference type="Gene3D" id="3.30.980.10">
    <property type="entry name" value="Threonyl-trna Synthetase, Chain A, domain 2"/>
    <property type="match status" value="1"/>
</dbReference>
<dbReference type="HAMAP" id="MF_00184">
    <property type="entry name" value="Thr_tRNA_synth"/>
    <property type="match status" value="1"/>
</dbReference>
<dbReference type="InterPro" id="IPR002314">
    <property type="entry name" value="aa-tRNA-synt_IIb"/>
</dbReference>
<dbReference type="InterPro" id="IPR006195">
    <property type="entry name" value="aa-tRNA-synth_II"/>
</dbReference>
<dbReference type="InterPro" id="IPR045864">
    <property type="entry name" value="aa-tRNA-synth_II/BPL/LPL"/>
</dbReference>
<dbReference type="InterPro" id="IPR004154">
    <property type="entry name" value="Anticodon-bd"/>
</dbReference>
<dbReference type="InterPro" id="IPR036621">
    <property type="entry name" value="Anticodon-bd_dom_sf"/>
</dbReference>
<dbReference type="InterPro" id="IPR012675">
    <property type="entry name" value="Beta-grasp_dom_sf"/>
</dbReference>
<dbReference type="InterPro" id="IPR004095">
    <property type="entry name" value="TGS"/>
</dbReference>
<dbReference type="InterPro" id="IPR012676">
    <property type="entry name" value="TGS-like"/>
</dbReference>
<dbReference type="InterPro" id="IPR002320">
    <property type="entry name" value="Thr-tRNA-ligase_IIa"/>
</dbReference>
<dbReference type="InterPro" id="IPR018163">
    <property type="entry name" value="Thr/Ala-tRNA-synth_IIc_edit"/>
</dbReference>
<dbReference type="InterPro" id="IPR047246">
    <property type="entry name" value="ThrRS_anticodon"/>
</dbReference>
<dbReference type="InterPro" id="IPR033728">
    <property type="entry name" value="ThrRS_core"/>
</dbReference>
<dbReference type="InterPro" id="IPR012947">
    <property type="entry name" value="tRNA_SAD"/>
</dbReference>
<dbReference type="NCBIfam" id="TIGR00418">
    <property type="entry name" value="thrS"/>
    <property type="match status" value="1"/>
</dbReference>
<dbReference type="PANTHER" id="PTHR11451:SF44">
    <property type="entry name" value="THREONINE--TRNA LIGASE, CHLOROPLASTIC_MITOCHONDRIAL 2"/>
    <property type="match status" value="1"/>
</dbReference>
<dbReference type="PANTHER" id="PTHR11451">
    <property type="entry name" value="THREONINE-TRNA LIGASE"/>
    <property type="match status" value="1"/>
</dbReference>
<dbReference type="Pfam" id="PF03129">
    <property type="entry name" value="HGTP_anticodon"/>
    <property type="match status" value="1"/>
</dbReference>
<dbReference type="Pfam" id="PF02824">
    <property type="entry name" value="TGS"/>
    <property type="match status" value="1"/>
</dbReference>
<dbReference type="Pfam" id="PF00587">
    <property type="entry name" value="tRNA-synt_2b"/>
    <property type="match status" value="1"/>
</dbReference>
<dbReference type="Pfam" id="PF07973">
    <property type="entry name" value="tRNA_SAD"/>
    <property type="match status" value="1"/>
</dbReference>
<dbReference type="PRINTS" id="PR01047">
    <property type="entry name" value="TRNASYNTHTHR"/>
</dbReference>
<dbReference type="SMART" id="SM00863">
    <property type="entry name" value="tRNA_SAD"/>
    <property type="match status" value="1"/>
</dbReference>
<dbReference type="SUPFAM" id="SSF52954">
    <property type="entry name" value="Class II aaRS ABD-related"/>
    <property type="match status" value="1"/>
</dbReference>
<dbReference type="SUPFAM" id="SSF55681">
    <property type="entry name" value="Class II aaRS and biotin synthetases"/>
    <property type="match status" value="1"/>
</dbReference>
<dbReference type="SUPFAM" id="SSF81271">
    <property type="entry name" value="TGS-like"/>
    <property type="match status" value="1"/>
</dbReference>
<dbReference type="SUPFAM" id="SSF55186">
    <property type="entry name" value="ThrRS/AlaRS common domain"/>
    <property type="match status" value="1"/>
</dbReference>
<dbReference type="PROSITE" id="PS50862">
    <property type="entry name" value="AA_TRNA_LIGASE_II"/>
    <property type="match status" value="1"/>
</dbReference>
<dbReference type="PROSITE" id="PS51880">
    <property type="entry name" value="TGS"/>
    <property type="match status" value="1"/>
</dbReference>